<sequence length="49" mass="5863">MLRKKVTLSCEECHSMNYSTNKSLMSVDRITVKKFCRKCNKHTMHKEEK</sequence>
<protein>
    <recommendedName>
        <fullName evidence="1">Large ribosomal subunit protein bL33A</fullName>
    </recommendedName>
    <alternativeName>
        <fullName evidence="1">50S ribosomal protein L33 1</fullName>
    </alternativeName>
</protein>
<proteinExistence type="inferred from homology"/>
<accession>A5IXI1</accession>
<dbReference type="EMBL" id="CU179680">
    <property type="protein sequence ID" value="CAL58740.1"/>
    <property type="molecule type" value="Genomic_DNA"/>
</dbReference>
<dbReference type="RefSeq" id="WP_004024222.1">
    <property type="nucleotide sequence ID" value="NC_009497.1"/>
</dbReference>
<dbReference type="SMR" id="A5IXI1"/>
<dbReference type="STRING" id="347257.MAG0430"/>
<dbReference type="GeneID" id="93358482"/>
<dbReference type="KEGG" id="maa:MAG0430"/>
<dbReference type="HOGENOM" id="CLU_190949_0_1_14"/>
<dbReference type="Proteomes" id="UP000007065">
    <property type="component" value="Chromosome"/>
</dbReference>
<dbReference type="GO" id="GO:0005737">
    <property type="term" value="C:cytoplasm"/>
    <property type="evidence" value="ECO:0007669"/>
    <property type="project" value="UniProtKB-ARBA"/>
</dbReference>
<dbReference type="GO" id="GO:1990904">
    <property type="term" value="C:ribonucleoprotein complex"/>
    <property type="evidence" value="ECO:0007669"/>
    <property type="project" value="UniProtKB-KW"/>
</dbReference>
<dbReference type="GO" id="GO:0005840">
    <property type="term" value="C:ribosome"/>
    <property type="evidence" value="ECO:0007669"/>
    <property type="project" value="UniProtKB-KW"/>
</dbReference>
<dbReference type="GO" id="GO:0003735">
    <property type="term" value="F:structural constituent of ribosome"/>
    <property type="evidence" value="ECO:0007669"/>
    <property type="project" value="InterPro"/>
</dbReference>
<dbReference type="GO" id="GO:0006412">
    <property type="term" value="P:translation"/>
    <property type="evidence" value="ECO:0007669"/>
    <property type="project" value="UniProtKB-UniRule"/>
</dbReference>
<dbReference type="Gene3D" id="2.20.28.120">
    <property type="entry name" value="Ribosomal protein L33"/>
    <property type="match status" value="1"/>
</dbReference>
<dbReference type="HAMAP" id="MF_00294">
    <property type="entry name" value="Ribosomal_bL33"/>
    <property type="match status" value="1"/>
</dbReference>
<dbReference type="InterPro" id="IPR001705">
    <property type="entry name" value="Ribosomal_bL33"/>
</dbReference>
<dbReference type="InterPro" id="IPR038584">
    <property type="entry name" value="Ribosomal_bL33_sf"/>
</dbReference>
<dbReference type="InterPro" id="IPR011332">
    <property type="entry name" value="Ribosomal_zn-bd"/>
</dbReference>
<dbReference type="NCBIfam" id="NF001764">
    <property type="entry name" value="PRK00504.1"/>
    <property type="match status" value="1"/>
</dbReference>
<dbReference type="NCBIfam" id="TIGR01023">
    <property type="entry name" value="rpmG_bact"/>
    <property type="match status" value="1"/>
</dbReference>
<dbReference type="Pfam" id="PF00471">
    <property type="entry name" value="Ribosomal_L33"/>
    <property type="match status" value="1"/>
</dbReference>
<dbReference type="SUPFAM" id="SSF57829">
    <property type="entry name" value="Zn-binding ribosomal proteins"/>
    <property type="match status" value="1"/>
</dbReference>
<evidence type="ECO:0000255" key="1">
    <source>
        <dbReference type="HAMAP-Rule" id="MF_00294"/>
    </source>
</evidence>
<gene>
    <name evidence="1" type="primary">rpmG1</name>
    <name type="ordered locus">MAG0430</name>
</gene>
<name>RL331_MYCAP</name>
<reference key="1">
    <citation type="journal article" date="2007" name="PLoS Genet.">
        <title>Being pathogenic, plastic, and sexual while living with a nearly minimal bacterial genome.</title>
        <authorList>
            <person name="Sirand-Pugnet P."/>
            <person name="Lartigue C."/>
            <person name="Marenda M."/>
            <person name="Jacob D."/>
            <person name="Barre A."/>
            <person name="Barbe V."/>
            <person name="Schenowitz C."/>
            <person name="Mangenot S."/>
            <person name="Couloux A."/>
            <person name="Segurens B."/>
            <person name="de Daruvar A."/>
            <person name="Blanchard A."/>
            <person name="Citti C."/>
        </authorList>
    </citation>
    <scope>NUCLEOTIDE SEQUENCE [LARGE SCALE GENOMIC DNA]</scope>
    <source>
        <strain>NCTC 10123 / CIP 59.7 / PG2</strain>
    </source>
</reference>
<keyword id="KW-1185">Reference proteome</keyword>
<keyword id="KW-0687">Ribonucleoprotein</keyword>
<keyword id="KW-0689">Ribosomal protein</keyword>
<feature type="chain" id="PRO_0000356569" description="Large ribosomal subunit protein bL33A">
    <location>
        <begin position="1"/>
        <end position="49"/>
    </location>
</feature>
<comment type="similarity">
    <text evidence="1">Belongs to the bacterial ribosomal protein bL33 family.</text>
</comment>
<organism>
    <name type="scientific">Mycoplasmopsis agalactiae (strain NCTC 10123 / CIP 59.7 / PG2)</name>
    <name type="common">Mycoplasma agalactiae</name>
    <dbReference type="NCBI Taxonomy" id="347257"/>
    <lineage>
        <taxon>Bacteria</taxon>
        <taxon>Bacillati</taxon>
        <taxon>Mycoplasmatota</taxon>
        <taxon>Mycoplasmoidales</taxon>
        <taxon>Metamycoplasmataceae</taxon>
        <taxon>Mycoplasmopsis</taxon>
    </lineage>
</organism>